<accession>O07118</accession>
<accession>D4GY02</accession>
<dbReference type="EC" id="4.6.1.16" evidence="1"/>
<dbReference type="EMBL" id="AF001578">
    <property type="protein sequence ID" value="AAC45446.1"/>
    <property type="molecule type" value="Genomic_DNA"/>
</dbReference>
<dbReference type="EMBL" id="CP001956">
    <property type="protein sequence ID" value="ADE04265.1"/>
    <property type="molecule type" value="Genomic_DNA"/>
</dbReference>
<dbReference type="PIR" id="T44993">
    <property type="entry name" value="T44993"/>
</dbReference>
<dbReference type="RefSeq" id="WP_004044805.1">
    <property type="nucleotide sequence ID" value="NC_013967.1"/>
</dbReference>
<dbReference type="SMR" id="O07118"/>
<dbReference type="STRING" id="309800.HVO_2952"/>
<dbReference type="PaxDb" id="309800-C498_17920"/>
<dbReference type="EnsemblBacteria" id="ADE04265">
    <property type="protein sequence ID" value="ADE04265"/>
    <property type="gene ID" value="HVO_2952"/>
</dbReference>
<dbReference type="GeneID" id="8926183"/>
<dbReference type="KEGG" id="hvo:HVO_2952"/>
<dbReference type="eggNOG" id="arCOG01701">
    <property type="taxonomic scope" value="Archaea"/>
</dbReference>
<dbReference type="HOGENOM" id="CLU_791347_0_0_2"/>
<dbReference type="OrthoDB" id="46045at2157"/>
<dbReference type="Proteomes" id="UP000008243">
    <property type="component" value="Chromosome"/>
</dbReference>
<dbReference type="GO" id="GO:0005737">
    <property type="term" value="C:cytoplasm"/>
    <property type="evidence" value="ECO:0007669"/>
    <property type="project" value="TreeGrafter"/>
</dbReference>
<dbReference type="GO" id="GO:0016829">
    <property type="term" value="F:lyase activity"/>
    <property type="evidence" value="ECO:0007669"/>
    <property type="project" value="UniProtKB-KW"/>
</dbReference>
<dbReference type="GO" id="GO:0003676">
    <property type="term" value="F:nucleic acid binding"/>
    <property type="evidence" value="ECO:0007669"/>
    <property type="project" value="InterPro"/>
</dbReference>
<dbReference type="GO" id="GO:0000213">
    <property type="term" value="F:tRNA-intron endonuclease activity"/>
    <property type="evidence" value="ECO:0007669"/>
    <property type="project" value="UniProtKB-UniRule"/>
</dbReference>
<dbReference type="GO" id="GO:0006388">
    <property type="term" value="P:tRNA splicing, via endonucleolytic cleavage and ligation"/>
    <property type="evidence" value="ECO:0007669"/>
    <property type="project" value="UniProtKB-UniRule"/>
</dbReference>
<dbReference type="CDD" id="cd22363">
    <property type="entry name" value="tRNA-intron_lyase_C"/>
    <property type="match status" value="2"/>
</dbReference>
<dbReference type="Gene3D" id="3.40.1350.10">
    <property type="match status" value="1"/>
</dbReference>
<dbReference type="Gene3D" id="3.40.1350.150">
    <property type="match status" value="1"/>
</dbReference>
<dbReference type="Gene3D" id="3.40.1170.20">
    <property type="entry name" value="tRNA intron endonuclease, N-terminal domain"/>
    <property type="match status" value="1"/>
</dbReference>
<dbReference type="HAMAP" id="MF_01834">
    <property type="entry name" value="EndA_long"/>
    <property type="match status" value="1"/>
</dbReference>
<dbReference type="InterPro" id="IPR011856">
    <property type="entry name" value="tRNA_endonuc-like_dom_sf"/>
</dbReference>
<dbReference type="InterPro" id="IPR036167">
    <property type="entry name" value="tRNA_intron_Endo_cat-like_sf"/>
</dbReference>
<dbReference type="InterPro" id="IPR006677">
    <property type="entry name" value="tRNA_intron_Endonuc_cat-like"/>
</dbReference>
<dbReference type="InterPro" id="IPR006678">
    <property type="entry name" value="tRNA_intron_Endonuc_N"/>
</dbReference>
<dbReference type="InterPro" id="IPR036740">
    <property type="entry name" value="tRNA_intron_Endonuc_N_sf"/>
</dbReference>
<dbReference type="InterPro" id="IPR006676">
    <property type="entry name" value="tRNA_splic"/>
</dbReference>
<dbReference type="InterPro" id="IPR023516">
    <property type="entry name" value="tRNA_splic_arch_long"/>
</dbReference>
<dbReference type="NCBIfam" id="TIGR00324">
    <property type="entry name" value="endA"/>
    <property type="match status" value="1"/>
</dbReference>
<dbReference type="NCBIfam" id="NF006794">
    <property type="entry name" value="PRK09300.1-1"/>
    <property type="match status" value="1"/>
</dbReference>
<dbReference type="PANTHER" id="PTHR21227">
    <property type="entry name" value="TRNA-SPLICING ENDONUCLEASE SUBUNIT SEN2"/>
    <property type="match status" value="1"/>
</dbReference>
<dbReference type="PANTHER" id="PTHR21227:SF0">
    <property type="entry name" value="TRNA-SPLICING ENDONUCLEASE SUBUNIT SEN2"/>
    <property type="match status" value="1"/>
</dbReference>
<dbReference type="Pfam" id="PF01974">
    <property type="entry name" value="tRNA_int_endo"/>
    <property type="match status" value="1"/>
</dbReference>
<dbReference type="Pfam" id="PF02778">
    <property type="entry name" value="tRNA_int_endo_N"/>
    <property type="match status" value="2"/>
</dbReference>
<dbReference type="SUPFAM" id="SSF53032">
    <property type="entry name" value="tRNA-intron endonuclease catalytic domain-like"/>
    <property type="match status" value="2"/>
</dbReference>
<dbReference type="SUPFAM" id="SSF55267">
    <property type="entry name" value="tRNA-intron endonuclease N-terminal domain-like"/>
    <property type="match status" value="2"/>
</dbReference>
<organism>
    <name type="scientific">Haloferax volcanii (strain ATCC 29605 / DSM 3757 / JCM 8879 / NBRC 14742 / NCIMB 2012 / VKM B-1768 / DS2)</name>
    <name type="common">Halobacterium volcanii</name>
    <dbReference type="NCBI Taxonomy" id="309800"/>
    <lineage>
        <taxon>Archaea</taxon>
        <taxon>Methanobacteriati</taxon>
        <taxon>Methanobacteriota</taxon>
        <taxon>Stenosarchaea group</taxon>
        <taxon>Halobacteria</taxon>
        <taxon>Halobacteriales</taxon>
        <taxon>Haloferacaceae</taxon>
        <taxon>Haloferax</taxon>
    </lineage>
</organism>
<name>ENDA_HALVD</name>
<gene>
    <name evidence="1" type="primary">endA</name>
    <name type="ordered locus">HVO_2952</name>
</gene>
<protein>
    <recommendedName>
        <fullName evidence="1">tRNA-splicing endonuclease</fullName>
        <ecNumber evidence="1">4.6.1.16</ecNumber>
    </recommendedName>
    <alternativeName>
        <fullName evidence="1">tRNA-intron endonuclease</fullName>
    </alternativeName>
</protein>
<evidence type="ECO:0000255" key="1">
    <source>
        <dbReference type="HAMAP-Rule" id="MF_01834"/>
    </source>
</evidence>
<evidence type="ECO:0000269" key="2">
    <source>
    </source>
</evidence>
<evidence type="ECO:0000269" key="3">
    <source>
    </source>
</evidence>
<evidence type="ECO:0000269" key="4">
    <source>
    </source>
</evidence>
<evidence type="ECO:0000305" key="5"/>
<keyword id="KW-0903">Direct protein sequencing</keyword>
<keyword id="KW-0456">Lyase</keyword>
<keyword id="KW-1185">Reference proteome</keyword>
<keyword id="KW-0819">tRNA processing</keyword>
<sequence length="339" mass="37418">MQGRLEDGVVHLPGDARQRFHDSRGYGRPTGGDDLEVAPVEAAHLLSRDDIDGVDGMGLRELLARTGTTLDFVVYKDLRDRGFYLSPAREGWPGVADAADADFLVYPRGKGPWDGEVEHRVRVVGERESIPVSSLGEVVLAIVDEDGDLTYFDTEGDDPEGTAAEDLPADLDAELLSDRALVWDGVDRLYQRGFFGQRLYGRNADSGPLQLSLLEAAYLARADALAIDEADVVSRGRDVEGDRFDRRLAVYAALREAKTVPKSGFKFGSDFRVYTEFESVDDLSHSEFLVRVVAPDHTFVPRDLSLDVRLAGGVRKRMVFALTDDNGEIDWLSVSRLTP</sequence>
<feature type="chain" id="PRO_0000109486" description="tRNA-splicing endonuclease">
    <location>
        <begin position="1"/>
        <end position="339"/>
    </location>
</feature>
<feature type="active site" evidence="1">
    <location>
        <position position="274"/>
    </location>
</feature>
<feature type="active site" evidence="1">
    <location>
        <position position="285"/>
    </location>
</feature>
<feature type="active site" evidence="1">
    <location>
        <position position="316"/>
    </location>
</feature>
<feature type="sequence conflict" description="In Ref. 1; AAC45446." evidence="5" ref="1">
    <original>Y</original>
    <variation>I</variation>
    <location>
        <position position="151"/>
    </location>
</feature>
<proteinExistence type="evidence at protein level"/>
<reference key="1">
    <citation type="journal article" date="1997" name="Cell">
        <title>Properties of H. volcanii tRNA intron endonuclease reveal a relationship between the archaeal and eucaryal tRNA intron processing systems.</title>
        <authorList>
            <person name="Kleman-Leyer K."/>
            <person name="Armbruster D.W."/>
            <person name="Daniels C.J."/>
        </authorList>
    </citation>
    <scope>NUCLEOTIDE SEQUENCE [GENOMIC DNA]</scope>
    <scope>PROTEIN SEQUENCE OF 68-76; 90-107; 203-220 AND 273-283</scope>
    <scope>FUNCTION</scope>
    <scope>SUBUNIT</scope>
    <source>
        <strain>DS2 / DSM 5716 / WFD11</strain>
    </source>
</reference>
<reference key="2">
    <citation type="journal article" date="2010" name="PLoS ONE">
        <title>The complete genome sequence of Haloferax volcanii DS2, a model archaeon.</title>
        <authorList>
            <person name="Hartman A.L."/>
            <person name="Norais C."/>
            <person name="Badger J.H."/>
            <person name="Delmas S."/>
            <person name="Haldenby S."/>
            <person name="Madupu R."/>
            <person name="Robinson J."/>
            <person name="Khouri H."/>
            <person name="Ren Q."/>
            <person name="Lowe T.M."/>
            <person name="Maupin-Furlow J."/>
            <person name="Pohlschroder M."/>
            <person name="Daniels C."/>
            <person name="Pfeiffer F."/>
            <person name="Allers T."/>
            <person name="Eisen J.A."/>
        </authorList>
    </citation>
    <scope>NUCLEOTIDE SEQUENCE [LARGE SCALE GENOMIC DNA]</scope>
    <source>
        <strain>ATCC 29605 / DSM 3757 / JCM 8879 / NBRC 14742 / NCIMB 2012 / VKM B-1768 / DS2</strain>
    </source>
</reference>
<reference key="3">
    <citation type="journal article" date="1988" name="J. Biol. Chem.">
        <title>A tRNA(Trp) intron endonuclease from Halobacterium volcanii. Unique substrate recognition properties.</title>
        <authorList>
            <person name="Thompson L.D."/>
            <person name="Daniels C.J."/>
        </authorList>
    </citation>
    <scope>FUNCTION</scope>
    <scope>CATALYTIC ACTIVITY</scope>
    <scope>COFACTOR</scope>
    <scope>BIOPHYSICOCHEMICAL PROPERTIES</scope>
    <scope>SUBSTRATE RECOGNITION</scope>
    <source>
        <strain>ATCC 29605 / DSM 3757 / JCM 8879 / NBRC 14742 / NCIMB 2012 / VKM B-1768 / DS2</strain>
    </source>
</reference>
<reference key="4">
    <citation type="journal article" date="1990" name="J. Biol. Chem.">
        <title>Recognition of exon-intron boundaries by the Halobacterium volcanii tRNA intron endonuclease.</title>
        <authorList>
            <person name="Thompson L.D."/>
            <person name="Daniels C.J."/>
        </authorList>
    </citation>
    <scope>FUNCTION</scope>
    <scope>SUBSTRATE RECOGNITION</scope>
    <source>
        <strain>ATCC 29605 / DSM 3757 / JCM 8879 / NBRC 14742 / NCIMB 2012 / VKM B-1768 / DS2</strain>
    </source>
</reference>
<comment type="function">
    <text evidence="2 3 4">Endonuclease that removes tRNA introns. Cleaves pre-tRNA at the 5'- and 3'-splice sites to release the intron. The products are an intron and two tRNA half-molecules bearing 2',3' cyclic phosphate and 5'-OH termini. Recognizes a pseudosymmetric substrate in which 2 bulged loops of 3 bases are separated by a stem of 4 bp.</text>
</comment>
<comment type="catalytic activity">
    <reaction evidence="1 3">
        <text>pretRNA = a 3'-half-tRNA molecule with a 5'-OH end + a 5'-half-tRNA molecule with a 2',3'-cyclic phosphate end + an intron with a 2',3'-cyclic phosphate and a 5'-hydroxyl terminus.</text>
        <dbReference type="EC" id="4.6.1.16"/>
    </reaction>
</comment>
<comment type="cofactor">
    <cofactor evidence="3">
        <name>Ca(2+)</name>
        <dbReference type="ChEBI" id="CHEBI:29108"/>
    </cofactor>
    <cofactor evidence="3">
        <name>Mg(2+)</name>
        <dbReference type="ChEBI" id="CHEBI:18420"/>
    </cofactor>
    <text evidence="3">Divalent cations; Ca(2+) better than Mg(2+).</text>
</comment>
<comment type="biophysicochemical properties">
    <phDependence>
        <text evidence="3">Optimum pH is 6.5-8.5.</text>
    </phDependence>
</comment>
<comment type="subunit">
    <text evidence="1 4">Homodimer.</text>
</comment>
<comment type="PTM">
    <text>The N-terminus is blocked.</text>
</comment>
<comment type="similarity">
    <text evidence="1">Belongs to the tRNA-intron endonuclease family. Archaeal long subfamily.</text>
</comment>